<name>DAPH_PETMO</name>
<evidence type="ECO:0000255" key="1">
    <source>
        <dbReference type="HAMAP-Rule" id="MF_01691"/>
    </source>
</evidence>
<proteinExistence type="inferred from homology"/>
<comment type="function">
    <text evidence="1">Catalyzes the transfer of an acetyl group from acetyl-CoA to tetrahydrodipicolinate.</text>
</comment>
<comment type="catalytic activity">
    <reaction evidence="1">
        <text>(S)-2,3,4,5-tetrahydrodipicolinate + acetyl-CoA + H2O = L-2-acetamido-6-oxoheptanedioate + CoA</text>
        <dbReference type="Rhea" id="RHEA:13085"/>
        <dbReference type="ChEBI" id="CHEBI:15377"/>
        <dbReference type="ChEBI" id="CHEBI:16845"/>
        <dbReference type="ChEBI" id="CHEBI:57287"/>
        <dbReference type="ChEBI" id="CHEBI:57288"/>
        <dbReference type="ChEBI" id="CHEBI:58117"/>
        <dbReference type="EC" id="2.3.1.89"/>
    </reaction>
</comment>
<comment type="pathway">
    <text evidence="1">Amino-acid biosynthesis; L-lysine biosynthesis via DAP pathway; LL-2,6-diaminopimelate from (S)-tetrahydrodipicolinate (acetylase route): step 1/3.</text>
</comment>
<comment type="similarity">
    <text evidence="1">Belongs to the transferase hexapeptide repeat family. DapH subfamily.</text>
</comment>
<accession>A9BHR6</accession>
<feature type="chain" id="PRO_0000376685" description="2,3,4,5-tetrahydropyridine-2,6-dicarboxylate N-acetyltransferase">
    <location>
        <begin position="1"/>
        <end position="233"/>
    </location>
</feature>
<gene>
    <name evidence="1" type="primary">dapH</name>
    <name type="ordered locus">Pmob_1222</name>
</gene>
<sequence>MNTEEIINLIANSKKKNPLKVYLKGNLKEVDFSNVEFYGNDEFGILFCEEEDFKTIYETYKDSIINYRIERDRKNSAIPLADLSKYNARIEPGAIIRDLVEIGDGCVIMMGAVINIGACIKENTMIDMNVVIGGRAQIGKNCHIGAGAVIAGVIEPPSAQPVVIENNVLIGANAVVLEGVKVGQGSIIGAGSVVISDVEPYSVVAGVPAKFIKKVDDKTKAKTQLVEGLRKLK</sequence>
<protein>
    <recommendedName>
        <fullName evidence="1">2,3,4,5-tetrahydropyridine-2,6-dicarboxylate N-acetyltransferase</fullName>
        <ecNumber evidence="1">2.3.1.89</ecNumber>
    </recommendedName>
    <alternativeName>
        <fullName evidence="1">Tetrahydrodipicolinate N-acetyltransferase</fullName>
        <shortName evidence="1">THP acetyltransferase</shortName>
        <shortName evidence="1">Tetrahydropicolinate acetylase</shortName>
    </alternativeName>
</protein>
<reference key="1">
    <citation type="submission" date="2007-11" db="EMBL/GenBank/DDBJ databases">
        <title>Complete sequence of Petroga mobilis SJ95.</title>
        <authorList>
            <consortium name="US DOE Joint Genome Institute"/>
            <person name="Copeland A."/>
            <person name="Lucas S."/>
            <person name="Lapidus A."/>
            <person name="Barry K."/>
            <person name="Glavina del Rio T."/>
            <person name="Dalin E."/>
            <person name="Tice H."/>
            <person name="Pitluck S."/>
            <person name="Meincke L."/>
            <person name="Brettin T."/>
            <person name="Bruce D."/>
            <person name="Detter J.C."/>
            <person name="Han C."/>
            <person name="Kuske C.R."/>
            <person name="Schmutz J."/>
            <person name="Larimer F."/>
            <person name="Land M."/>
            <person name="Hauser L."/>
            <person name="Kyrpides N."/>
            <person name="Mikhailova N."/>
            <person name="Noll K."/>
            <person name="Richardson P."/>
        </authorList>
    </citation>
    <scope>NUCLEOTIDE SEQUENCE [LARGE SCALE GENOMIC DNA]</scope>
    <source>
        <strain>DSM 10674 / SJ95</strain>
    </source>
</reference>
<keyword id="KW-0012">Acyltransferase</keyword>
<keyword id="KW-0028">Amino-acid biosynthesis</keyword>
<keyword id="KW-0220">Diaminopimelate biosynthesis</keyword>
<keyword id="KW-0457">Lysine biosynthesis</keyword>
<keyword id="KW-0677">Repeat</keyword>
<keyword id="KW-0808">Transferase</keyword>
<dbReference type="EC" id="2.3.1.89" evidence="1"/>
<dbReference type="EMBL" id="CP000879">
    <property type="protein sequence ID" value="ABX31938.1"/>
    <property type="molecule type" value="Genomic_DNA"/>
</dbReference>
<dbReference type="SMR" id="A9BHR6"/>
<dbReference type="STRING" id="403833.Pmob_1222"/>
<dbReference type="KEGG" id="pmo:Pmob_1222"/>
<dbReference type="eggNOG" id="COG2171">
    <property type="taxonomic scope" value="Bacteria"/>
</dbReference>
<dbReference type="HOGENOM" id="CLU_103751_0_0_0"/>
<dbReference type="OrthoDB" id="9788080at2"/>
<dbReference type="UniPathway" id="UPA00034">
    <property type="reaction ID" value="UER00022"/>
</dbReference>
<dbReference type="Proteomes" id="UP000000789">
    <property type="component" value="Chromosome"/>
</dbReference>
<dbReference type="GO" id="GO:0047200">
    <property type="term" value="F:tetrahydrodipicolinate N-acetyltransferase activity"/>
    <property type="evidence" value="ECO:0007669"/>
    <property type="project" value="UniProtKB-EC"/>
</dbReference>
<dbReference type="GO" id="GO:0019877">
    <property type="term" value="P:diaminopimelate biosynthetic process"/>
    <property type="evidence" value="ECO:0007669"/>
    <property type="project" value="UniProtKB-UniRule"/>
</dbReference>
<dbReference type="GO" id="GO:0009089">
    <property type="term" value="P:lysine biosynthetic process via diaminopimelate"/>
    <property type="evidence" value="ECO:0007669"/>
    <property type="project" value="UniProtKB-UniRule"/>
</dbReference>
<dbReference type="CDD" id="cd03350">
    <property type="entry name" value="LbH_THP_succinylT"/>
    <property type="match status" value="1"/>
</dbReference>
<dbReference type="Gene3D" id="2.160.10.10">
    <property type="entry name" value="Hexapeptide repeat proteins"/>
    <property type="match status" value="1"/>
</dbReference>
<dbReference type="Gene3D" id="3.30.70.250">
    <property type="entry name" value="Malonyl-CoA ACP transacylase, ACP-binding"/>
    <property type="match status" value="1"/>
</dbReference>
<dbReference type="HAMAP" id="MF_01691">
    <property type="entry name" value="DapH"/>
    <property type="match status" value="1"/>
</dbReference>
<dbReference type="InterPro" id="IPR019873">
    <property type="entry name" value="DapH"/>
</dbReference>
<dbReference type="InterPro" id="IPR013710">
    <property type="entry name" value="DapH_N"/>
</dbReference>
<dbReference type="InterPro" id="IPR001451">
    <property type="entry name" value="Hexapep"/>
</dbReference>
<dbReference type="InterPro" id="IPR018357">
    <property type="entry name" value="Hexapep_transf_CS"/>
</dbReference>
<dbReference type="InterPro" id="IPR050179">
    <property type="entry name" value="Trans_hexapeptide_repeat"/>
</dbReference>
<dbReference type="InterPro" id="IPR011004">
    <property type="entry name" value="Trimer_LpxA-like_sf"/>
</dbReference>
<dbReference type="NCBIfam" id="TIGR03532">
    <property type="entry name" value="DapD_Ac"/>
    <property type="match status" value="1"/>
</dbReference>
<dbReference type="PANTHER" id="PTHR43300:SF10">
    <property type="entry name" value="2,3,4,5-TETRAHYDROPYRIDINE-2,6-DICARBOXYLATE N-ACETYLTRANSFERASE"/>
    <property type="match status" value="1"/>
</dbReference>
<dbReference type="PANTHER" id="PTHR43300">
    <property type="entry name" value="ACETYLTRANSFERASE"/>
    <property type="match status" value="1"/>
</dbReference>
<dbReference type="Pfam" id="PF08503">
    <property type="entry name" value="DapH_N"/>
    <property type="match status" value="1"/>
</dbReference>
<dbReference type="Pfam" id="PF00132">
    <property type="entry name" value="Hexapep"/>
    <property type="match status" value="2"/>
</dbReference>
<dbReference type="Pfam" id="PF14602">
    <property type="entry name" value="Hexapep_2"/>
    <property type="match status" value="1"/>
</dbReference>
<dbReference type="SUPFAM" id="SSF51161">
    <property type="entry name" value="Trimeric LpxA-like enzymes"/>
    <property type="match status" value="1"/>
</dbReference>
<dbReference type="PROSITE" id="PS00101">
    <property type="entry name" value="HEXAPEP_TRANSFERASES"/>
    <property type="match status" value="1"/>
</dbReference>
<organism>
    <name type="scientific">Petrotoga mobilis (strain DSM 10674 / SJ95)</name>
    <dbReference type="NCBI Taxonomy" id="403833"/>
    <lineage>
        <taxon>Bacteria</taxon>
        <taxon>Thermotogati</taxon>
        <taxon>Thermotogota</taxon>
        <taxon>Thermotogae</taxon>
        <taxon>Petrotogales</taxon>
        <taxon>Petrotogaceae</taxon>
        <taxon>Petrotoga</taxon>
    </lineage>
</organism>